<organism>
    <name type="scientific">Arabidopsis thaliana</name>
    <name type="common">Mouse-ear cress</name>
    <dbReference type="NCBI Taxonomy" id="3702"/>
    <lineage>
        <taxon>Eukaryota</taxon>
        <taxon>Viridiplantae</taxon>
        <taxon>Streptophyta</taxon>
        <taxon>Embryophyta</taxon>
        <taxon>Tracheophyta</taxon>
        <taxon>Spermatophyta</taxon>
        <taxon>Magnoliopsida</taxon>
        <taxon>eudicotyledons</taxon>
        <taxon>Gunneridae</taxon>
        <taxon>Pentapetalae</taxon>
        <taxon>rosids</taxon>
        <taxon>malvids</taxon>
        <taxon>Brassicales</taxon>
        <taxon>Brassicaceae</taxon>
        <taxon>Camelineae</taxon>
        <taxon>Arabidopsis</taxon>
    </lineage>
</organism>
<proteinExistence type="evidence at transcript level"/>
<comment type="subcellular location">
    <subcellularLocation>
        <location evidence="3">Mitochondrion</location>
    </subcellularLocation>
</comment>
<comment type="similarity">
    <text evidence="3">Belongs to the PPR family. P subfamily.</text>
</comment>
<comment type="online information" name="Pentatricopeptide repeat proteins">
    <link uri="https://ppr.plantenergy.uwa.edu.au"/>
</comment>
<accession>Q9SSR6</accession>
<name>PPR78_ARATH</name>
<reference key="1">
    <citation type="journal article" date="2000" name="Nature">
        <title>Sequence and analysis of chromosome 1 of the plant Arabidopsis thaliana.</title>
        <authorList>
            <person name="Theologis A."/>
            <person name="Ecker J.R."/>
            <person name="Palm C.J."/>
            <person name="Federspiel N.A."/>
            <person name="Kaul S."/>
            <person name="White O."/>
            <person name="Alonso J."/>
            <person name="Altafi H."/>
            <person name="Araujo R."/>
            <person name="Bowman C.L."/>
            <person name="Brooks S.Y."/>
            <person name="Buehler E."/>
            <person name="Chan A."/>
            <person name="Chao Q."/>
            <person name="Chen H."/>
            <person name="Cheuk R.F."/>
            <person name="Chin C.W."/>
            <person name="Chung M.K."/>
            <person name="Conn L."/>
            <person name="Conway A.B."/>
            <person name="Conway A.R."/>
            <person name="Creasy T.H."/>
            <person name="Dewar K."/>
            <person name="Dunn P."/>
            <person name="Etgu P."/>
            <person name="Feldblyum T.V."/>
            <person name="Feng J.-D."/>
            <person name="Fong B."/>
            <person name="Fujii C.Y."/>
            <person name="Gill J.E."/>
            <person name="Goldsmith A.D."/>
            <person name="Haas B."/>
            <person name="Hansen N.F."/>
            <person name="Hughes B."/>
            <person name="Huizar L."/>
            <person name="Hunter J.L."/>
            <person name="Jenkins J."/>
            <person name="Johnson-Hopson C."/>
            <person name="Khan S."/>
            <person name="Khaykin E."/>
            <person name="Kim C.J."/>
            <person name="Koo H.L."/>
            <person name="Kremenetskaia I."/>
            <person name="Kurtz D.B."/>
            <person name="Kwan A."/>
            <person name="Lam B."/>
            <person name="Langin-Hooper S."/>
            <person name="Lee A."/>
            <person name="Lee J.M."/>
            <person name="Lenz C.A."/>
            <person name="Li J.H."/>
            <person name="Li Y.-P."/>
            <person name="Lin X."/>
            <person name="Liu S.X."/>
            <person name="Liu Z.A."/>
            <person name="Luros J.S."/>
            <person name="Maiti R."/>
            <person name="Marziali A."/>
            <person name="Militscher J."/>
            <person name="Miranda M."/>
            <person name="Nguyen M."/>
            <person name="Nierman W.C."/>
            <person name="Osborne B.I."/>
            <person name="Pai G."/>
            <person name="Peterson J."/>
            <person name="Pham P.K."/>
            <person name="Rizzo M."/>
            <person name="Rooney T."/>
            <person name="Rowley D."/>
            <person name="Sakano H."/>
            <person name="Salzberg S.L."/>
            <person name="Schwartz J.R."/>
            <person name="Shinn P."/>
            <person name="Southwick A.M."/>
            <person name="Sun H."/>
            <person name="Tallon L.J."/>
            <person name="Tambunga G."/>
            <person name="Toriumi M.J."/>
            <person name="Town C.D."/>
            <person name="Utterback T."/>
            <person name="Van Aken S."/>
            <person name="Vaysberg M."/>
            <person name="Vysotskaia V.S."/>
            <person name="Walker M."/>
            <person name="Wu D."/>
            <person name="Yu G."/>
            <person name="Fraser C.M."/>
            <person name="Venter J.C."/>
            <person name="Davis R.W."/>
        </authorList>
    </citation>
    <scope>NUCLEOTIDE SEQUENCE [LARGE SCALE GENOMIC DNA]</scope>
    <source>
        <strain>cv. Columbia</strain>
    </source>
</reference>
<reference key="2">
    <citation type="journal article" date="2017" name="Plant J.">
        <title>Araport11: a complete reannotation of the Arabidopsis thaliana reference genome.</title>
        <authorList>
            <person name="Cheng C.Y."/>
            <person name="Krishnakumar V."/>
            <person name="Chan A.P."/>
            <person name="Thibaud-Nissen F."/>
            <person name="Schobel S."/>
            <person name="Town C.D."/>
        </authorList>
    </citation>
    <scope>GENOME REANNOTATION</scope>
    <source>
        <strain>cv. Columbia</strain>
    </source>
</reference>
<reference key="3">
    <citation type="submission" date="2004-03" db="EMBL/GenBank/DDBJ databases">
        <title>Arabidopsis ORF clones.</title>
        <authorList>
            <person name="Cheuk R.F."/>
            <person name="Chen H."/>
            <person name="Kim C.J."/>
            <person name="Shinn P."/>
            <person name="Carninci P."/>
            <person name="Hayashizaki Y."/>
            <person name="Ishida J."/>
            <person name="Kamiya A."/>
            <person name="Kawai J."/>
            <person name="Narusaka M."/>
            <person name="Sakurai T."/>
            <person name="Satou M."/>
            <person name="Seki M."/>
            <person name="Shinozaki K."/>
            <person name="Ecker J.R."/>
        </authorList>
    </citation>
    <scope>NUCLEOTIDE SEQUENCE [LARGE SCALE MRNA]</scope>
    <source>
        <strain>cv. Columbia</strain>
    </source>
</reference>
<reference key="4">
    <citation type="submission" date="2005-03" db="EMBL/GenBank/DDBJ databases">
        <title>Large-scale analysis of RIKEN Arabidopsis full-length (RAFL) cDNAs.</title>
        <authorList>
            <person name="Totoki Y."/>
            <person name="Seki M."/>
            <person name="Ishida J."/>
            <person name="Nakajima M."/>
            <person name="Enju A."/>
            <person name="Kamiya A."/>
            <person name="Narusaka M."/>
            <person name="Shin-i T."/>
            <person name="Nakagawa M."/>
            <person name="Sakamoto N."/>
            <person name="Oishi K."/>
            <person name="Kohara Y."/>
            <person name="Kobayashi M."/>
            <person name="Toyoda A."/>
            <person name="Sakaki Y."/>
            <person name="Sakurai T."/>
            <person name="Iida K."/>
            <person name="Akiyama K."/>
            <person name="Satou M."/>
            <person name="Toyoda T."/>
            <person name="Konagaya A."/>
            <person name="Carninci P."/>
            <person name="Kawai J."/>
            <person name="Hayashizaki Y."/>
            <person name="Shinozaki K."/>
        </authorList>
    </citation>
    <scope>NUCLEOTIDE SEQUENCE [LARGE SCALE MRNA]</scope>
    <source>
        <strain>cv. Columbia</strain>
    </source>
</reference>
<reference key="5">
    <citation type="journal article" date="2004" name="Plant Cell">
        <title>Genome-wide analysis of Arabidopsis pentatricopeptide repeat proteins reveals their essential role in organelle biogenesis.</title>
        <authorList>
            <person name="Lurin C."/>
            <person name="Andres C."/>
            <person name="Aubourg S."/>
            <person name="Bellaoui M."/>
            <person name="Bitton F."/>
            <person name="Bruyere C."/>
            <person name="Caboche M."/>
            <person name="Debast C."/>
            <person name="Gualberto J."/>
            <person name="Hoffmann B."/>
            <person name="Lecharny A."/>
            <person name="Le Ret M."/>
            <person name="Martin-Magniette M.-L."/>
            <person name="Mireau H."/>
            <person name="Peeters N."/>
            <person name="Renou J.-P."/>
            <person name="Szurek B."/>
            <person name="Taconnat L."/>
            <person name="Small I."/>
        </authorList>
    </citation>
    <scope>GENE FAMILY</scope>
</reference>
<feature type="transit peptide" description="Mitochondrion" evidence="1">
    <location>
        <begin position="1"/>
        <end position="5"/>
    </location>
</feature>
<feature type="chain" id="PRO_0000342819" description="Pentatricopeptide repeat-containing protein At1g52640, mitochondrial">
    <location>
        <begin position="6"/>
        <end position="523"/>
    </location>
</feature>
<feature type="repeat" description="PPR 1">
    <location>
        <begin position="101"/>
        <end position="135"/>
    </location>
</feature>
<feature type="repeat" description="PPR 2">
    <location>
        <begin position="137"/>
        <end position="171"/>
    </location>
</feature>
<feature type="repeat" description="PPR 3">
    <location>
        <begin position="172"/>
        <end position="206"/>
    </location>
</feature>
<feature type="repeat" description="PPR 4">
    <location>
        <begin position="207"/>
        <end position="241"/>
    </location>
</feature>
<feature type="repeat" description="PPR 5">
    <location>
        <begin position="242"/>
        <end position="276"/>
    </location>
</feature>
<feature type="repeat" description="PPR 6">
    <location>
        <begin position="277"/>
        <end position="311"/>
    </location>
</feature>
<feature type="repeat" description="PPR 7">
    <location>
        <begin position="312"/>
        <end position="346"/>
    </location>
</feature>
<feature type="repeat" description="PPR 8">
    <location>
        <begin position="347"/>
        <end position="381"/>
    </location>
</feature>
<feature type="repeat" description="PPR 9">
    <location>
        <begin position="382"/>
        <end position="416"/>
    </location>
</feature>
<feature type="repeat" description="PPR 10">
    <location>
        <begin position="417"/>
        <end position="452"/>
    </location>
</feature>
<feature type="region of interest" description="Disordered" evidence="2">
    <location>
        <begin position="498"/>
        <end position="523"/>
    </location>
</feature>
<feature type="compositionally biased region" description="Acidic residues" evidence="2">
    <location>
        <begin position="509"/>
        <end position="523"/>
    </location>
</feature>
<dbReference type="EMBL" id="AC008016">
    <property type="protein sequence ID" value="AAD55601.1"/>
    <property type="molecule type" value="Genomic_DNA"/>
</dbReference>
<dbReference type="EMBL" id="CP002684">
    <property type="protein sequence ID" value="AEE32833.1"/>
    <property type="molecule type" value="Genomic_DNA"/>
</dbReference>
<dbReference type="EMBL" id="AK221591">
    <property type="protein sequence ID" value="BAD95108.1"/>
    <property type="molecule type" value="mRNA"/>
</dbReference>
<dbReference type="EMBL" id="BT012287">
    <property type="protein sequence ID" value="AAS76774.1"/>
    <property type="molecule type" value="mRNA"/>
</dbReference>
<dbReference type="PIR" id="C96567">
    <property type="entry name" value="C96567"/>
</dbReference>
<dbReference type="RefSeq" id="NP_175673.1">
    <property type="nucleotide sequence ID" value="NM_104142.3"/>
</dbReference>
<dbReference type="SMR" id="Q9SSR6"/>
<dbReference type="FunCoup" id="Q9SSR6">
    <property type="interactions" value="321"/>
</dbReference>
<dbReference type="iPTMnet" id="Q9SSR6"/>
<dbReference type="PaxDb" id="3702-AT1G52640.1"/>
<dbReference type="ProteomicsDB" id="236657"/>
<dbReference type="EnsemblPlants" id="AT1G52640.1">
    <property type="protein sequence ID" value="AT1G52640.1"/>
    <property type="gene ID" value="AT1G52640"/>
</dbReference>
<dbReference type="GeneID" id="841696"/>
<dbReference type="Gramene" id="AT1G52640.1">
    <property type="protein sequence ID" value="AT1G52640.1"/>
    <property type="gene ID" value="AT1G52640"/>
</dbReference>
<dbReference type="KEGG" id="ath:AT1G52640"/>
<dbReference type="Araport" id="AT1G52640"/>
<dbReference type="TAIR" id="AT1G52640"/>
<dbReference type="eggNOG" id="KOG4197">
    <property type="taxonomic scope" value="Eukaryota"/>
</dbReference>
<dbReference type="HOGENOM" id="CLU_002706_49_20_1"/>
<dbReference type="InParanoid" id="Q9SSR6"/>
<dbReference type="OMA" id="RFFIWAQ"/>
<dbReference type="PhylomeDB" id="Q9SSR6"/>
<dbReference type="PRO" id="PR:Q9SSR6"/>
<dbReference type="Proteomes" id="UP000006548">
    <property type="component" value="Chromosome 1"/>
</dbReference>
<dbReference type="ExpressionAtlas" id="Q9SSR6">
    <property type="expression patterns" value="baseline and differential"/>
</dbReference>
<dbReference type="GO" id="GO:0005739">
    <property type="term" value="C:mitochondrion"/>
    <property type="evidence" value="ECO:0007669"/>
    <property type="project" value="UniProtKB-SubCell"/>
</dbReference>
<dbReference type="Gene3D" id="1.25.40.10">
    <property type="entry name" value="Tetratricopeptide repeat domain"/>
    <property type="match status" value="4"/>
</dbReference>
<dbReference type="InterPro" id="IPR002885">
    <property type="entry name" value="Pentatricopeptide_rpt"/>
</dbReference>
<dbReference type="InterPro" id="IPR011990">
    <property type="entry name" value="TPR-like_helical_dom_sf"/>
</dbReference>
<dbReference type="NCBIfam" id="TIGR00756">
    <property type="entry name" value="PPR"/>
    <property type="match status" value="8"/>
</dbReference>
<dbReference type="PANTHER" id="PTHR47941">
    <property type="entry name" value="PENTATRICOPEPTIDE REPEAT-CONTAINING PROTEIN 3, MITOCHONDRIAL"/>
    <property type="match status" value="1"/>
</dbReference>
<dbReference type="Pfam" id="PF01535">
    <property type="entry name" value="PPR"/>
    <property type="match status" value="2"/>
</dbReference>
<dbReference type="Pfam" id="PF13041">
    <property type="entry name" value="PPR_2"/>
    <property type="match status" value="3"/>
</dbReference>
<dbReference type="PROSITE" id="PS51375">
    <property type="entry name" value="PPR"/>
    <property type="match status" value="10"/>
</dbReference>
<keyword id="KW-0496">Mitochondrion</keyword>
<keyword id="KW-1185">Reference proteome</keyword>
<keyword id="KW-0677">Repeat</keyword>
<keyword id="KW-0809">Transit peptide</keyword>
<protein>
    <recommendedName>
        <fullName>Pentatricopeptide repeat-containing protein At1g52640, mitochondrial</fullName>
    </recommendedName>
</protein>
<sequence length="523" mass="60420">MAIRTVSSLVRALYQTPKSQSFRIFSTLLHDPPSPDLVNEISRVLSDHRNPKDDLEHTLVAYSPRVSSNLVEQVLKRCKNLGFPAHRFFLWARRIPDFAHSLESYHILVEILGSSKQFALLWDFLIEAREYNYFEISSKVFWIVFRAYSRANLPSEACRAFNRMVEFGIKPCVDDLDQLLHSLCDKKHVNHAQEFFGKAKGFGIVPSAKTYSILVRGWARIRDASGARKVFDEMLERNCVVDLLAYNALLDALCKSGDVDGGYKMFQEMGNLGLKPDAYSFAIFIHAYCDAGDVHSAYKVLDRMKRYDLVPNVYTFNHIIKTLCKNEKVDDAYLLLDEMIQKGANPDTWTYNSIMAYHCDHCEVNRATKLLSRMDRTKCLPDRHTYNMVLKLLIRIGRFDRATEIWEGMSERKFYPTVATYTVMIHGLVRKKGKLEEACRYFEMMIDEGIPPYSTTVEMLRNRLVGWGQMDVVDVLAGKMERSSSCSVQDMAVEMRGKRRRLGRRSENSEDDDDDFELERDTI</sequence>
<gene>
    <name type="ordered locus">At1g52640</name>
    <name type="ORF">F6D8.14</name>
</gene>
<evidence type="ECO:0000255" key="1"/>
<evidence type="ECO:0000256" key="2">
    <source>
        <dbReference type="SAM" id="MobiDB-lite"/>
    </source>
</evidence>
<evidence type="ECO:0000305" key="3"/>